<proteinExistence type="inferred from homology"/>
<evidence type="ECO:0000255" key="1">
    <source>
        <dbReference type="HAMAP-Rule" id="MF_01456"/>
    </source>
</evidence>
<dbReference type="EC" id="7.1.1.-" evidence="1"/>
<dbReference type="EMBL" id="D01014">
    <property type="protein sequence ID" value="BAA00817.1"/>
    <property type="molecule type" value="Genomic_DNA"/>
</dbReference>
<dbReference type="PIR" id="JQ2138">
    <property type="entry name" value="JQ2138"/>
</dbReference>
<dbReference type="SMR" id="Q00244"/>
<dbReference type="GO" id="GO:0030964">
    <property type="term" value="C:NADH dehydrogenase complex"/>
    <property type="evidence" value="ECO:0007669"/>
    <property type="project" value="TreeGrafter"/>
</dbReference>
<dbReference type="GO" id="GO:0031676">
    <property type="term" value="C:plasma membrane-derived thylakoid membrane"/>
    <property type="evidence" value="ECO:0007669"/>
    <property type="project" value="UniProtKB-SubCell"/>
</dbReference>
<dbReference type="GO" id="GO:0016655">
    <property type="term" value="F:oxidoreductase activity, acting on NAD(P)H, quinone or similar compound as acceptor"/>
    <property type="evidence" value="ECO:0007669"/>
    <property type="project" value="UniProtKB-UniRule"/>
</dbReference>
<dbReference type="GO" id="GO:0048038">
    <property type="term" value="F:quinone binding"/>
    <property type="evidence" value="ECO:0007669"/>
    <property type="project" value="UniProtKB-KW"/>
</dbReference>
<dbReference type="GO" id="GO:0042773">
    <property type="term" value="P:ATP synthesis coupled electron transport"/>
    <property type="evidence" value="ECO:0007669"/>
    <property type="project" value="InterPro"/>
</dbReference>
<dbReference type="GO" id="GO:0019684">
    <property type="term" value="P:photosynthesis, light reaction"/>
    <property type="evidence" value="ECO:0007669"/>
    <property type="project" value="UniProtKB-UniRule"/>
</dbReference>
<dbReference type="FunFam" id="1.10.287.3510:FF:000001">
    <property type="entry name" value="NADH-quinone oxidoreductase subunit K"/>
    <property type="match status" value="1"/>
</dbReference>
<dbReference type="Gene3D" id="1.10.287.3510">
    <property type="match status" value="1"/>
</dbReference>
<dbReference type="HAMAP" id="MF_01456">
    <property type="entry name" value="NDH1_NuoK"/>
    <property type="match status" value="1"/>
</dbReference>
<dbReference type="InterPro" id="IPR001133">
    <property type="entry name" value="NADH_UbQ_OxRdtase_chain4L/K"/>
</dbReference>
<dbReference type="InterPro" id="IPR039428">
    <property type="entry name" value="NUOK/Mnh_C1-like"/>
</dbReference>
<dbReference type="NCBIfam" id="NF004320">
    <property type="entry name" value="PRK05715.1-2"/>
    <property type="match status" value="1"/>
</dbReference>
<dbReference type="NCBIfam" id="NF004321">
    <property type="entry name" value="PRK05715.1-3"/>
    <property type="match status" value="1"/>
</dbReference>
<dbReference type="NCBIfam" id="NF004322">
    <property type="entry name" value="PRK05715.1-4"/>
    <property type="match status" value="1"/>
</dbReference>
<dbReference type="NCBIfam" id="NF004323">
    <property type="entry name" value="PRK05715.1-5"/>
    <property type="match status" value="1"/>
</dbReference>
<dbReference type="PANTHER" id="PTHR11434:SF16">
    <property type="entry name" value="NADH-UBIQUINONE OXIDOREDUCTASE CHAIN 4L"/>
    <property type="match status" value="1"/>
</dbReference>
<dbReference type="PANTHER" id="PTHR11434">
    <property type="entry name" value="NADH-UBIQUINONE OXIDOREDUCTASE SUBUNIT ND4L"/>
    <property type="match status" value="1"/>
</dbReference>
<dbReference type="Pfam" id="PF00420">
    <property type="entry name" value="Oxidored_q2"/>
    <property type="match status" value="1"/>
</dbReference>
<reference key="1">
    <citation type="journal article" date="1991" name="Plant Cell Physiol.">
        <title>Structure of a co-transcribed gene cluster, ndh1-frxB-ndh6-ndh4L, cloned from the filamentous cyanobacterium Plectonema boryanum.</title>
        <authorList>
            <person name="Takahashi Y."/>
            <person name="Shonai F."/>
            <person name="Fujita Y."/>
            <person name="Kohchi T."/>
            <person name="Ohyama K."/>
            <person name="Matsubara H."/>
        </authorList>
    </citation>
    <scope>NUCLEOTIDE SEQUENCE [GENOMIC DNA]</scope>
    <source>
        <strain>ATCC 27894 / CCAP 1463/1 / IAM M-101 / PCC 6306 / UTEX 581</strain>
    </source>
</reference>
<protein>
    <recommendedName>
        <fullName evidence="1">NAD(P)H-quinone oxidoreductase subunit 4L</fullName>
        <ecNumber evidence="1">7.1.1.-</ecNumber>
    </recommendedName>
    <alternativeName>
        <fullName evidence="1">NAD(P)H dehydrogenase subunit 4L</fullName>
    </alternativeName>
    <alternativeName>
        <fullName evidence="1">NADH-plastoquinone oxidoreductase subunit 4L</fullName>
    </alternativeName>
    <alternativeName>
        <fullName evidence="1">NDH-1, subunit 4L</fullName>
    </alternativeName>
    <alternativeName>
        <fullName evidence="1">NDH-E</fullName>
    </alternativeName>
</protein>
<name>NU4LC_LEPBY</name>
<comment type="function">
    <text evidence="1">NDH-1 shuttles electrons from an unknown electron donor, via FMN and iron-sulfur (Fe-S) centers, to quinones in the respiratory and/or the photosynthetic chain. The immediate electron acceptor for the enzyme in this species is believed to be plastoquinone. Couples the redox reaction to proton translocation, and thus conserves the redox energy in a proton gradient. Cyanobacterial NDH-1 also plays a role in inorganic carbon-concentration.</text>
</comment>
<comment type="catalytic activity">
    <reaction evidence="1">
        <text>a plastoquinone + NADH + (n+1) H(+)(in) = a plastoquinol + NAD(+) + n H(+)(out)</text>
        <dbReference type="Rhea" id="RHEA:42608"/>
        <dbReference type="Rhea" id="RHEA-COMP:9561"/>
        <dbReference type="Rhea" id="RHEA-COMP:9562"/>
        <dbReference type="ChEBI" id="CHEBI:15378"/>
        <dbReference type="ChEBI" id="CHEBI:17757"/>
        <dbReference type="ChEBI" id="CHEBI:57540"/>
        <dbReference type="ChEBI" id="CHEBI:57945"/>
        <dbReference type="ChEBI" id="CHEBI:62192"/>
    </reaction>
</comment>
<comment type="catalytic activity">
    <reaction evidence="1">
        <text>a plastoquinone + NADPH + (n+1) H(+)(in) = a plastoquinol + NADP(+) + n H(+)(out)</text>
        <dbReference type="Rhea" id="RHEA:42612"/>
        <dbReference type="Rhea" id="RHEA-COMP:9561"/>
        <dbReference type="Rhea" id="RHEA-COMP:9562"/>
        <dbReference type="ChEBI" id="CHEBI:15378"/>
        <dbReference type="ChEBI" id="CHEBI:17757"/>
        <dbReference type="ChEBI" id="CHEBI:57783"/>
        <dbReference type="ChEBI" id="CHEBI:58349"/>
        <dbReference type="ChEBI" id="CHEBI:62192"/>
    </reaction>
</comment>
<comment type="subunit">
    <text evidence="1">NDH-1 can be composed of about 15 different subunits; different subcomplexes with different compositions have been identified which probably have different functions.</text>
</comment>
<comment type="subcellular location">
    <subcellularLocation>
        <location evidence="1">Cellular thylakoid membrane</location>
        <topology evidence="1">Multi-pass membrane protein</topology>
    </subcellularLocation>
</comment>
<comment type="similarity">
    <text evidence="1">Belongs to the complex I subunit 4L family.</text>
</comment>
<accession>Q00244</accession>
<organism>
    <name type="scientific">Leptolyngbya boryana</name>
    <name type="common">Plectonema boryanum</name>
    <dbReference type="NCBI Taxonomy" id="1184"/>
    <lineage>
        <taxon>Bacteria</taxon>
        <taxon>Bacillati</taxon>
        <taxon>Cyanobacteriota</taxon>
        <taxon>Cyanophyceae</taxon>
        <taxon>Leptolyngbyales</taxon>
        <taxon>Leptolyngbyaceae</taxon>
        <taxon>Leptolyngbya group</taxon>
        <taxon>Leptolyngbya</taxon>
    </lineage>
</organism>
<keyword id="KW-0472">Membrane</keyword>
<keyword id="KW-0520">NAD</keyword>
<keyword id="KW-0521">NADP</keyword>
<keyword id="KW-0618">Plastoquinone</keyword>
<keyword id="KW-0874">Quinone</keyword>
<keyword id="KW-0793">Thylakoid</keyword>
<keyword id="KW-1278">Translocase</keyword>
<keyword id="KW-0812">Transmembrane</keyword>
<keyword id="KW-1133">Transmembrane helix</keyword>
<keyword id="KW-0813">Transport</keyword>
<gene>
    <name evidence="1" type="primary">ndhE</name>
    <name type="synonym">ndh4L</name>
</gene>
<feature type="chain" id="PRO_0000118520" description="NAD(P)H-quinone oxidoreductase subunit 4L">
    <location>
        <begin position="1"/>
        <end position="101"/>
    </location>
</feature>
<feature type="transmembrane region" description="Helical" evidence="1">
    <location>
        <begin position="3"/>
        <end position="23"/>
    </location>
</feature>
<feature type="transmembrane region" description="Helical" evidence="1">
    <location>
        <begin position="30"/>
        <end position="50"/>
    </location>
</feature>
<feature type="transmembrane region" description="Helical" evidence="1">
    <location>
        <begin position="64"/>
        <end position="84"/>
    </location>
</feature>
<sequence>MQLQYFLLIAAALFCIGVYGLVTSRNAVRVLMSIELMLNAVNLNLMAFSNYLDPQEIKGQMFTIFVITIAAAEAAVGLAIVLAIYRNRDTVDMEQFNLLKW</sequence>